<dbReference type="EC" id="7.1.1.2" evidence="4 5"/>
<dbReference type="EMBL" id="AK002501">
    <property type="protein sequence ID" value="BAB22149.1"/>
    <property type="molecule type" value="mRNA"/>
</dbReference>
<dbReference type="EMBL" id="AK088337">
    <property type="protein sequence ID" value="BAC40291.1"/>
    <property type="molecule type" value="mRNA"/>
</dbReference>
<dbReference type="EMBL" id="AL672241">
    <property type="status" value="NOT_ANNOTATED_CDS"/>
    <property type="molecule type" value="Genomic_DNA"/>
</dbReference>
<dbReference type="EMBL" id="BC027270">
    <property type="protein sequence ID" value="AAH27270.1"/>
    <property type="molecule type" value="mRNA"/>
</dbReference>
<dbReference type="EMBL" id="BC119267">
    <property type="protein sequence ID" value="AAI19268.1"/>
    <property type="molecule type" value="mRNA"/>
</dbReference>
<dbReference type="EMBL" id="BC119269">
    <property type="protein sequence ID" value="AAI19270.1"/>
    <property type="molecule type" value="mRNA"/>
</dbReference>
<dbReference type="CCDS" id="CCDS16418.1"/>
<dbReference type="RefSeq" id="NP_080964.1">
    <property type="nucleotide sequence ID" value="NM_026688.3"/>
</dbReference>
<dbReference type="PDB" id="6G2J">
    <property type="method" value="EM"/>
    <property type="resolution" value="3.30 A"/>
    <property type="chains" value="C=1-263"/>
</dbReference>
<dbReference type="PDB" id="6G72">
    <property type="method" value="EM"/>
    <property type="resolution" value="3.90 A"/>
    <property type="chains" value="C=1-263"/>
</dbReference>
<dbReference type="PDB" id="6ZR2">
    <property type="method" value="EM"/>
    <property type="resolution" value="3.10 A"/>
    <property type="chains" value="C=1-263"/>
</dbReference>
<dbReference type="PDB" id="6ZTQ">
    <property type="method" value="EM"/>
    <property type="resolution" value="3.00 A"/>
    <property type="chains" value="C=1-263"/>
</dbReference>
<dbReference type="PDB" id="7AK5">
    <property type="method" value="EM"/>
    <property type="resolution" value="3.17 A"/>
    <property type="chains" value="C=1-263"/>
</dbReference>
<dbReference type="PDB" id="7AK6">
    <property type="method" value="EM"/>
    <property type="resolution" value="3.82 A"/>
    <property type="chains" value="C=1-263"/>
</dbReference>
<dbReference type="PDB" id="7B93">
    <property type="method" value="EM"/>
    <property type="resolution" value="3.04 A"/>
    <property type="chains" value="C=1-263"/>
</dbReference>
<dbReference type="PDB" id="7PSA">
    <property type="method" value="EM"/>
    <property type="resolution" value="3.40 A"/>
    <property type="chains" value="C=1-263"/>
</dbReference>
<dbReference type="PDB" id="8C2S">
    <property type="method" value="EM"/>
    <property type="resolution" value="3.90 A"/>
    <property type="chains" value="C=1-263"/>
</dbReference>
<dbReference type="PDB" id="8CA3">
    <property type="method" value="EM"/>
    <property type="resolution" value="3.20 A"/>
    <property type="chains" value="C=1-263"/>
</dbReference>
<dbReference type="PDB" id="8CA5">
    <property type="method" value="EM"/>
    <property type="resolution" value="3.90 A"/>
    <property type="chains" value="C=1-263"/>
</dbReference>
<dbReference type="PDB" id="8IAO">
    <property type="method" value="EM"/>
    <property type="resolution" value="4.20 A"/>
    <property type="chains" value="C=1-263"/>
</dbReference>
<dbReference type="PDB" id="8IAP">
    <property type="method" value="EM"/>
    <property type="resolution" value="3.20 A"/>
    <property type="chains" value="C=1-263"/>
</dbReference>
<dbReference type="PDB" id="8IB4">
    <property type="method" value="EM"/>
    <property type="resolution" value="4.30 A"/>
    <property type="chains" value="C=1-263"/>
</dbReference>
<dbReference type="PDB" id="8IB5">
    <property type="method" value="EM"/>
    <property type="resolution" value="3.30 A"/>
    <property type="chains" value="C=1-263"/>
</dbReference>
<dbReference type="PDB" id="8IB9">
    <property type="method" value="EM"/>
    <property type="resolution" value="4.30 A"/>
    <property type="chains" value="C=1-263"/>
</dbReference>
<dbReference type="PDB" id="8IBA">
    <property type="method" value="EM"/>
    <property type="resolution" value="3.20 A"/>
    <property type="chains" value="C=1-263"/>
</dbReference>
<dbReference type="PDB" id="8IBD">
    <property type="method" value="EM"/>
    <property type="resolution" value="4.20 A"/>
    <property type="chains" value="C=1-263"/>
</dbReference>
<dbReference type="PDB" id="8IBE">
    <property type="method" value="EM"/>
    <property type="resolution" value="3.30 A"/>
    <property type="chains" value="C=1-263"/>
</dbReference>
<dbReference type="PDB" id="8IC2">
    <property type="method" value="EM"/>
    <property type="resolution" value="6.30 A"/>
    <property type="chains" value="C=1-263"/>
</dbReference>
<dbReference type="PDB" id="8IC3">
    <property type="method" value="EM"/>
    <property type="resolution" value="3.20 A"/>
    <property type="chains" value="C=1-263"/>
</dbReference>
<dbReference type="PDB" id="8OLT">
    <property type="method" value="EM"/>
    <property type="resolution" value="2.84 A"/>
    <property type="chains" value="C=1-263"/>
</dbReference>
<dbReference type="PDB" id="8OM1">
    <property type="method" value="EM"/>
    <property type="resolution" value="2.39 A"/>
    <property type="chains" value="C=1-263"/>
</dbReference>
<dbReference type="PDB" id="8PW5">
    <property type="method" value="EM"/>
    <property type="resolution" value="3.60 A"/>
    <property type="chains" value="C1=1-263"/>
</dbReference>
<dbReference type="PDB" id="8PW6">
    <property type="method" value="EM"/>
    <property type="resolution" value="3.30 A"/>
    <property type="chains" value="C1=1-263"/>
</dbReference>
<dbReference type="PDB" id="8PW7">
    <property type="method" value="EM"/>
    <property type="resolution" value="3.50 A"/>
    <property type="chains" value="C1=1-263"/>
</dbReference>
<dbReference type="PDB" id="8RGP">
    <property type="method" value="EM"/>
    <property type="resolution" value="3.00 A"/>
    <property type="chains" value="C=1-263"/>
</dbReference>
<dbReference type="PDB" id="8RGQ">
    <property type="method" value="EM"/>
    <property type="resolution" value="3.00 A"/>
    <property type="chains" value="C=1-263"/>
</dbReference>
<dbReference type="PDB" id="8RGR">
    <property type="method" value="EM"/>
    <property type="resolution" value="2.90 A"/>
    <property type="chains" value="C=1-263"/>
</dbReference>
<dbReference type="PDB" id="8RGT">
    <property type="method" value="EM"/>
    <property type="resolution" value="3.10 A"/>
    <property type="chains" value="C=1-263"/>
</dbReference>
<dbReference type="PDB" id="8UCA">
    <property type="method" value="EM"/>
    <property type="resolution" value="3.70 A"/>
    <property type="chains" value="S3/s3=1-263"/>
</dbReference>
<dbReference type="PDB" id="8XNL">
    <property type="method" value="EM"/>
    <property type="resolution" value="3.10 A"/>
    <property type="chains" value="C=1-263"/>
</dbReference>
<dbReference type="PDB" id="8XNM">
    <property type="method" value="EM"/>
    <property type="resolution" value="3.50 A"/>
    <property type="chains" value="C=1-263"/>
</dbReference>
<dbReference type="PDB" id="8XNN">
    <property type="method" value="EM"/>
    <property type="resolution" value="3.60 A"/>
    <property type="chains" value="C=1-263"/>
</dbReference>
<dbReference type="PDB" id="8XNO">
    <property type="method" value="EM"/>
    <property type="resolution" value="3.40 A"/>
    <property type="chains" value="C=1-263"/>
</dbReference>
<dbReference type="PDB" id="8XNP">
    <property type="method" value="EM"/>
    <property type="resolution" value="3.50 A"/>
    <property type="chains" value="C=1-263"/>
</dbReference>
<dbReference type="PDB" id="8XNQ">
    <property type="method" value="EM"/>
    <property type="resolution" value="3.70 A"/>
    <property type="chains" value="C=1-263"/>
</dbReference>
<dbReference type="PDB" id="8XNR">
    <property type="method" value="EM"/>
    <property type="resolution" value="3.30 A"/>
    <property type="chains" value="C=1-263"/>
</dbReference>
<dbReference type="PDB" id="8XNS">
    <property type="method" value="EM"/>
    <property type="resolution" value="3.50 A"/>
    <property type="chains" value="C=1-263"/>
</dbReference>
<dbReference type="PDB" id="8XNT">
    <property type="method" value="EM"/>
    <property type="resolution" value="4.10 A"/>
    <property type="chains" value="C=1-263"/>
</dbReference>
<dbReference type="PDB" id="8XNU">
    <property type="method" value="EM"/>
    <property type="resolution" value="3.60 A"/>
    <property type="chains" value="C=1-263"/>
</dbReference>
<dbReference type="PDB" id="8XNV">
    <property type="method" value="EM"/>
    <property type="resolution" value="3.30 A"/>
    <property type="chains" value="C=1-263"/>
</dbReference>
<dbReference type="PDB" id="8XNW">
    <property type="method" value="EM"/>
    <property type="resolution" value="3.60 A"/>
    <property type="chains" value="C=1-263"/>
</dbReference>
<dbReference type="PDB" id="8XNX">
    <property type="method" value="EM"/>
    <property type="resolution" value="3.50 A"/>
    <property type="chains" value="C=1-263"/>
</dbReference>
<dbReference type="PDB" id="8XNY">
    <property type="method" value="EM"/>
    <property type="resolution" value="4.10 A"/>
    <property type="chains" value="C=1-263"/>
</dbReference>
<dbReference type="PDB" id="8XNZ">
    <property type="method" value="EM"/>
    <property type="resolution" value="3.30 A"/>
    <property type="chains" value="C=1-263"/>
</dbReference>
<dbReference type="PDB" id="8XO0">
    <property type="method" value="EM"/>
    <property type="resolution" value="4.20 A"/>
    <property type="chains" value="C=1-263"/>
</dbReference>
<dbReference type="PDBsum" id="6G2J"/>
<dbReference type="PDBsum" id="6G72"/>
<dbReference type="PDBsum" id="6ZR2"/>
<dbReference type="PDBsum" id="6ZTQ"/>
<dbReference type="PDBsum" id="7AK5"/>
<dbReference type="PDBsum" id="7AK6"/>
<dbReference type="PDBsum" id="7B93"/>
<dbReference type="PDBsum" id="7PSA"/>
<dbReference type="PDBsum" id="8C2S"/>
<dbReference type="PDBsum" id="8CA3"/>
<dbReference type="PDBsum" id="8CA5"/>
<dbReference type="PDBsum" id="8IAO"/>
<dbReference type="PDBsum" id="8IAP"/>
<dbReference type="PDBsum" id="8IB4"/>
<dbReference type="PDBsum" id="8IB5"/>
<dbReference type="PDBsum" id="8IB9"/>
<dbReference type="PDBsum" id="8IBA"/>
<dbReference type="PDBsum" id="8IBD"/>
<dbReference type="PDBsum" id="8IBE"/>
<dbReference type="PDBsum" id="8IC2"/>
<dbReference type="PDBsum" id="8IC3"/>
<dbReference type="PDBsum" id="8OLT"/>
<dbReference type="PDBsum" id="8OM1"/>
<dbReference type="PDBsum" id="8PW5"/>
<dbReference type="PDBsum" id="8PW6"/>
<dbReference type="PDBsum" id="8PW7"/>
<dbReference type="PDBsum" id="8RGP"/>
<dbReference type="PDBsum" id="8RGQ"/>
<dbReference type="PDBsum" id="8RGR"/>
<dbReference type="PDBsum" id="8RGT"/>
<dbReference type="PDBsum" id="8UCA"/>
<dbReference type="PDBsum" id="8XNL"/>
<dbReference type="PDBsum" id="8XNM"/>
<dbReference type="PDBsum" id="8XNN"/>
<dbReference type="PDBsum" id="8XNO"/>
<dbReference type="PDBsum" id="8XNP"/>
<dbReference type="PDBsum" id="8XNQ"/>
<dbReference type="PDBsum" id="8XNR"/>
<dbReference type="PDBsum" id="8XNS"/>
<dbReference type="PDBsum" id="8XNT"/>
<dbReference type="PDBsum" id="8XNU"/>
<dbReference type="PDBsum" id="8XNV"/>
<dbReference type="PDBsum" id="8XNW"/>
<dbReference type="PDBsum" id="8XNX"/>
<dbReference type="PDBsum" id="8XNY"/>
<dbReference type="PDBsum" id="8XNZ"/>
<dbReference type="PDBsum" id="8XO0"/>
<dbReference type="EMDB" id="EMD-11377"/>
<dbReference type="EMDB" id="EMD-11424"/>
<dbReference type="EMDB" id="EMD-11810"/>
<dbReference type="EMDB" id="EMD-11811"/>
<dbReference type="EMDB" id="EMD-12095"/>
<dbReference type="EMDB" id="EMD-13611"/>
<dbReference type="EMDB" id="EMD-16398"/>
<dbReference type="EMDB" id="EMD-16516"/>
<dbReference type="EMDB" id="EMD-16518"/>
<dbReference type="EMDB" id="EMD-16962"/>
<dbReference type="EMDB" id="EMD-16965"/>
<dbReference type="EMDB" id="EMD-17989"/>
<dbReference type="EMDB" id="EMD-17990"/>
<dbReference type="EMDB" id="EMD-17991"/>
<dbReference type="EMDB" id="EMD-19145"/>
<dbReference type="EMDB" id="EMD-19146"/>
<dbReference type="EMDB" id="EMD-19147"/>
<dbReference type="EMDB" id="EMD-19148"/>
<dbReference type="EMDB" id="EMD-35313"/>
<dbReference type="EMDB" id="EMD-35314"/>
<dbReference type="EMDB" id="EMD-35331"/>
<dbReference type="EMDB" id="EMD-35332"/>
<dbReference type="EMDB" id="EMD-35336"/>
<dbReference type="EMDB" id="EMD-35337"/>
<dbReference type="EMDB" id="EMD-35340"/>
<dbReference type="EMDB" id="EMD-35341"/>
<dbReference type="EMDB" id="EMD-35352"/>
<dbReference type="EMDB" id="EMD-35353"/>
<dbReference type="EMDB" id="EMD-38506"/>
<dbReference type="EMDB" id="EMD-38507"/>
<dbReference type="EMDB" id="EMD-38508"/>
<dbReference type="EMDB" id="EMD-38509"/>
<dbReference type="EMDB" id="EMD-38510"/>
<dbReference type="EMDB" id="EMD-38511"/>
<dbReference type="EMDB" id="EMD-38512"/>
<dbReference type="EMDB" id="EMD-38513"/>
<dbReference type="EMDB" id="EMD-38514"/>
<dbReference type="EMDB" id="EMD-38515"/>
<dbReference type="EMDB" id="EMD-38516"/>
<dbReference type="EMDB" id="EMD-38517"/>
<dbReference type="EMDB" id="EMD-38518"/>
<dbReference type="EMDB" id="EMD-38519"/>
<dbReference type="EMDB" id="EMD-38520"/>
<dbReference type="EMDB" id="EMD-38521"/>
<dbReference type="EMDB" id="EMD-42122"/>
<dbReference type="EMDB" id="EMD-4345"/>
<dbReference type="EMDB" id="EMD-4356"/>
<dbReference type="SMR" id="Q9DCT2"/>
<dbReference type="BioGRID" id="212816">
    <property type="interactions" value="86"/>
</dbReference>
<dbReference type="ComplexPortal" id="CPX-266">
    <property type="entry name" value="Mitochondrial respiratory chain complex I"/>
</dbReference>
<dbReference type="CORUM" id="Q9DCT2"/>
<dbReference type="DIP" id="DIP-32378N"/>
<dbReference type="FunCoup" id="Q9DCT2">
    <property type="interactions" value="1911"/>
</dbReference>
<dbReference type="IntAct" id="Q9DCT2">
    <property type="interactions" value="10"/>
</dbReference>
<dbReference type="MINT" id="Q9DCT2"/>
<dbReference type="STRING" id="10090.ENSMUSP00000005647"/>
<dbReference type="GlyGen" id="Q9DCT2">
    <property type="glycosylation" value="1 site, 1 O-linked glycan (1 site)"/>
</dbReference>
<dbReference type="iPTMnet" id="Q9DCT2"/>
<dbReference type="PhosphoSitePlus" id="Q9DCT2"/>
<dbReference type="SwissPalm" id="Q9DCT2"/>
<dbReference type="jPOST" id="Q9DCT2"/>
<dbReference type="PaxDb" id="10090-ENSMUSP00000005647"/>
<dbReference type="PeptideAtlas" id="Q9DCT2"/>
<dbReference type="ProteomicsDB" id="253047"/>
<dbReference type="Pumba" id="Q9DCT2"/>
<dbReference type="TopDownProteomics" id="Q9DCT2"/>
<dbReference type="Antibodypedia" id="1262">
    <property type="antibodies" value="312 antibodies from 34 providers"/>
</dbReference>
<dbReference type="Ensembl" id="ENSMUST00000005647.4">
    <property type="protein sequence ID" value="ENSMUSP00000005647.4"/>
    <property type="gene ID" value="ENSMUSG00000005510.10"/>
</dbReference>
<dbReference type="GeneID" id="68349"/>
<dbReference type="KEGG" id="mmu:68349"/>
<dbReference type="UCSC" id="uc008ktr.1">
    <property type="organism name" value="mouse"/>
</dbReference>
<dbReference type="AGR" id="MGI:1915599"/>
<dbReference type="CTD" id="4722"/>
<dbReference type="MGI" id="MGI:1915599">
    <property type="gene designation" value="Ndufs3"/>
</dbReference>
<dbReference type="VEuPathDB" id="HostDB:ENSMUSG00000005510"/>
<dbReference type="eggNOG" id="KOG1713">
    <property type="taxonomic scope" value="Eukaryota"/>
</dbReference>
<dbReference type="GeneTree" id="ENSGT00390000017480"/>
<dbReference type="HOGENOM" id="CLU_042628_0_1_1"/>
<dbReference type="InParanoid" id="Q9DCT2"/>
<dbReference type="OMA" id="PCRKNRF"/>
<dbReference type="OrthoDB" id="37721at2759"/>
<dbReference type="PhylomeDB" id="Q9DCT2"/>
<dbReference type="TreeFam" id="TF314794"/>
<dbReference type="Reactome" id="R-MMU-611105">
    <property type="pathway name" value="Respiratory electron transport"/>
</dbReference>
<dbReference type="Reactome" id="R-MMU-6799198">
    <property type="pathway name" value="Complex I biogenesis"/>
</dbReference>
<dbReference type="Reactome" id="R-MMU-9013408">
    <property type="pathway name" value="RHOG GTPase cycle"/>
</dbReference>
<dbReference type="Reactome" id="R-MMU-9837999">
    <property type="pathway name" value="Mitochondrial protein degradation"/>
</dbReference>
<dbReference type="BioGRID-ORCS" id="68349">
    <property type="hits" value="15 hits in 77 CRISPR screens"/>
</dbReference>
<dbReference type="CD-CODE" id="CE726F99">
    <property type="entry name" value="Postsynaptic density"/>
</dbReference>
<dbReference type="ChiTaRS" id="Ndufs3">
    <property type="organism name" value="mouse"/>
</dbReference>
<dbReference type="PRO" id="PR:Q9DCT2"/>
<dbReference type="Proteomes" id="UP000000589">
    <property type="component" value="Chromosome 2"/>
</dbReference>
<dbReference type="RNAct" id="Q9DCT2">
    <property type="molecule type" value="protein"/>
</dbReference>
<dbReference type="Bgee" id="ENSMUSG00000005510">
    <property type="expression patterns" value="Expressed in quadriceps femoris and 90 other cell types or tissues"/>
</dbReference>
<dbReference type="GO" id="GO:0005743">
    <property type="term" value="C:mitochondrial inner membrane"/>
    <property type="evidence" value="ECO:0000314"/>
    <property type="project" value="UniProtKB"/>
</dbReference>
<dbReference type="GO" id="GO:0031966">
    <property type="term" value="C:mitochondrial membrane"/>
    <property type="evidence" value="ECO:0000250"/>
    <property type="project" value="UniProtKB"/>
</dbReference>
<dbReference type="GO" id="GO:0005739">
    <property type="term" value="C:mitochondrion"/>
    <property type="evidence" value="ECO:0000314"/>
    <property type="project" value="MGI"/>
</dbReference>
<dbReference type="GO" id="GO:0043209">
    <property type="term" value="C:myelin sheath"/>
    <property type="evidence" value="ECO:0007005"/>
    <property type="project" value="UniProtKB"/>
</dbReference>
<dbReference type="GO" id="GO:0016604">
    <property type="term" value="C:nuclear body"/>
    <property type="evidence" value="ECO:0007669"/>
    <property type="project" value="Ensembl"/>
</dbReference>
<dbReference type="GO" id="GO:0045271">
    <property type="term" value="C:respiratory chain complex I"/>
    <property type="evidence" value="ECO:0000314"/>
    <property type="project" value="UniProtKB"/>
</dbReference>
<dbReference type="GO" id="GO:0008137">
    <property type="term" value="F:NADH dehydrogenase (ubiquinone) activity"/>
    <property type="evidence" value="ECO:0000315"/>
    <property type="project" value="UniProtKB"/>
</dbReference>
<dbReference type="GO" id="GO:0003954">
    <property type="term" value="F:NADH dehydrogenase activity"/>
    <property type="evidence" value="ECO:0000250"/>
    <property type="project" value="UniProtKB"/>
</dbReference>
<dbReference type="GO" id="GO:0009060">
    <property type="term" value="P:aerobic respiration"/>
    <property type="evidence" value="ECO:0000303"/>
    <property type="project" value="ComplexPortal"/>
</dbReference>
<dbReference type="GO" id="GO:0006120">
    <property type="term" value="P:mitochondrial electron transport, NADH to ubiquinone"/>
    <property type="evidence" value="ECO:0000315"/>
    <property type="project" value="UniProtKB"/>
</dbReference>
<dbReference type="GO" id="GO:0032981">
    <property type="term" value="P:mitochondrial respiratory chain complex I assembly"/>
    <property type="evidence" value="ECO:0000315"/>
    <property type="project" value="UniProtKB"/>
</dbReference>
<dbReference type="GO" id="GO:0042776">
    <property type="term" value="P:proton motive force-driven mitochondrial ATP synthesis"/>
    <property type="evidence" value="ECO:0000303"/>
    <property type="project" value="ComplexPortal"/>
</dbReference>
<dbReference type="GO" id="GO:0072593">
    <property type="term" value="P:reactive oxygen species metabolic process"/>
    <property type="evidence" value="ECO:0000250"/>
    <property type="project" value="UniProtKB"/>
</dbReference>
<dbReference type="FunFam" id="3.30.460.80:FF:000002">
    <property type="entry name" value="NADH dehydrogenase iron-sulfur protein 3, mitochondrial"/>
    <property type="match status" value="1"/>
</dbReference>
<dbReference type="Gene3D" id="3.30.460.80">
    <property type="entry name" value="NADH:ubiquinone oxidoreductase, 30kDa subunit"/>
    <property type="match status" value="1"/>
</dbReference>
<dbReference type="HAMAP" id="MF_01357">
    <property type="entry name" value="NDH1_NuoC"/>
    <property type="match status" value="1"/>
</dbReference>
<dbReference type="InterPro" id="IPR010218">
    <property type="entry name" value="NADH_DH_suC"/>
</dbReference>
<dbReference type="InterPro" id="IPR037232">
    <property type="entry name" value="NADH_quin_OxRdtase_su_C/D-like"/>
</dbReference>
<dbReference type="InterPro" id="IPR001268">
    <property type="entry name" value="NADH_UbQ_OxRdtase_30kDa_su"/>
</dbReference>
<dbReference type="InterPro" id="IPR020396">
    <property type="entry name" value="NADH_UbQ_OxRdtase_CS"/>
</dbReference>
<dbReference type="NCBIfam" id="TIGR01961">
    <property type="entry name" value="NuoC_fam"/>
    <property type="match status" value="1"/>
</dbReference>
<dbReference type="NCBIfam" id="NF004733">
    <property type="entry name" value="PRK06074.1-5"/>
    <property type="match status" value="1"/>
</dbReference>
<dbReference type="PANTHER" id="PTHR10884:SF14">
    <property type="entry name" value="NADH DEHYDROGENASE [UBIQUINONE] IRON-SULFUR PROTEIN 3, MITOCHONDRIAL"/>
    <property type="match status" value="1"/>
</dbReference>
<dbReference type="PANTHER" id="PTHR10884">
    <property type="entry name" value="NADH DEHYDROGENASE UBIQUINONE IRON-SULFUR PROTEIN 3"/>
    <property type="match status" value="1"/>
</dbReference>
<dbReference type="Pfam" id="PF00329">
    <property type="entry name" value="Complex1_30kDa"/>
    <property type="match status" value="1"/>
</dbReference>
<dbReference type="SUPFAM" id="SSF143243">
    <property type="entry name" value="Nqo5-like"/>
    <property type="match status" value="1"/>
</dbReference>
<dbReference type="PROSITE" id="PS00542">
    <property type="entry name" value="COMPLEX1_30K"/>
    <property type="match status" value="1"/>
</dbReference>
<keyword id="KW-0002">3D-structure</keyword>
<keyword id="KW-0903">Direct protein sequencing</keyword>
<keyword id="KW-0249">Electron transport</keyword>
<keyword id="KW-0472">Membrane</keyword>
<keyword id="KW-0496">Mitochondrion</keyword>
<keyword id="KW-0999">Mitochondrion inner membrane</keyword>
<keyword id="KW-0520">NAD</keyword>
<keyword id="KW-0560">Oxidoreductase</keyword>
<keyword id="KW-1185">Reference proteome</keyword>
<keyword id="KW-0679">Respiratory chain</keyword>
<keyword id="KW-0809">Transit peptide</keyword>
<keyword id="KW-1278">Translocase</keyword>
<keyword id="KW-0813">Transport</keyword>
<keyword id="KW-0830">Ubiquinone</keyword>
<gene>
    <name type="primary">Ndufs3</name>
</gene>
<accession>Q9DCT2</accession>
<accession>Q8BTZ3</accession>
<accession>Q8R073</accession>
<comment type="function">
    <text evidence="4 5 6">Core subunit of the mitochondrial membrane respiratory chain NADH dehydrogenase (Complex I) which catalyzes electron transfer from NADH through the respiratory chain, using ubiquinone as an electron acceptor (PubMed:31916679, PubMed:33148885, PubMed:38575788). Essential for the catalytic activity and assembly of complex I (PubMed:31916679, PubMed:33148885).</text>
</comment>
<comment type="catalytic activity">
    <reaction evidence="4 5">
        <text>a ubiquinone + NADH + 5 H(+)(in) = a ubiquinol + NAD(+) + 4 H(+)(out)</text>
        <dbReference type="Rhea" id="RHEA:29091"/>
        <dbReference type="Rhea" id="RHEA-COMP:9565"/>
        <dbReference type="Rhea" id="RHEA-COMP:9566"/>
        <dbReference type="ChEBI" id="CHEBI:15378"/>
        <dbReference type="ChEBI" id="CHEBI:16389"/>
        <dbReference type="ChEBI" id="CHEBI:17976"/>
        <dbReference type="ChEBI" id="CHEBI:57540"/>
        <dbReference type="ChEBI" id="CHEBI:57945"/>
        <dbReference type="EC" id="7.1.1.2"/>
    </reaction>
</comment>
<comment type="subunit">
    <text evidence="1 3 6">Core subunit of respiratory chain NADH dehydrogenase (Complex I) which is composed of 45 different subunits (PubMed:38575788). Interacts with NDUFAF3 (By similarity). Interacts with RAB5IF (PubMed:31536960). Found in subcomplexes containing subunits NDUFS2, MT-ND1 and NDUFA13 (By similarity).</text>
</comment>
<comment type="subcellular location">
    <subcellularLocation>
        <location evidence="6">Mitochondrion inner membrane</location>
        <topology evidence="6">Peripheral membrane protein</topology>
        <orientation evidence="6">Matrix side</orientation>
    </subcellularLocation>
</comment>
<comment type="disruption phenotype">
    <text evidence="4 5">Conditional knockout (KO) in the forebrain neurons results in reduced complex I activity, altered brain energy metabolism, increased locomotor activity with impaired motor coordination, balance and stereotyped behavior, neuroinflammation in cortex and hippocampus, and neuronal death in hippocampus (PubMed:33148885). Conditional KO in skeletal muscle results in development of a progressive myopathy resulting in premature death, muscle degeneration accompanied by increased mitochondrial proliferation and serum lactic acidosis and a decrease in complex I activity, assembly and expression in muscle (PubMed:31916679).</text>
</comment>
<comment type="similarity">
    <text evidence="7">Belongs to the complex I 30 kDa subunit family.</text>
</comment>
<feature type="transit peptide" description="Mitochondrion" evidence="2">
    <location>
        <begin position="1"/>
        <end position="35"/>
    </location>
</feature>
<feature type="chain" id="PRO_0000019999" description="NADH dehydrogenase [ubiquinone] iron-sulfur protein 3, mitochondrial">
    <location>
        <begin position="36"/>
        <end position="263"/>
    </location>
</feature>
<feature type="sequence conflict" description="In Ref. 1; BAB22149." evidence="7" ref="1">
    <original>G</original>
    <variation>D</variation>
    <location>
        <position position="20"/>
    </location>
</feature>
<feature type="sequence conflict" description="In Ref. 3; AAH27270." evidence="7" ref="3">
    <original>A</original>
    <variation>P</variation>
    <location>
        <position position="23"/>
    </location>
</feature>
<feature type="sequence conflict" description="In Ref. 3; AAH27270." evidence="7" ref="3">
    <original>R</original>
    <variation>W</variation>
    <location>
        <position position="49"/>
    </location>
</feature>
<feature type="strand" evidence="9">
    <location>
        <begin position="44"/>
        <end position="46"/>
    </location>
</feature>
<feature type="helix" evidence="11">
    <location>
        <begin position="52"/>
        <end position="67"/>
    </location>
</feature>
<feature type="turn" evidence="11">
    <location>
        <begin position="69"/>
        <end position="71"/>
    </location>
</feature>
<feature type="strand" evidence="11">
    <location>
        <begin position="72"/>
        <end position="77"/>
    </location>
</feature>
<feature type="strand" evidence="10">
    <location>
        <begin position="79"/>
        <end position="81"/>
    </location>
</feature>
<feature type="strand" evidence="11">
    <location>
        <begin position="83"/>
        <end position="87"/>
    </location>
</feature>
<feature type="helix" evidence="11">
    <location>
        <begin position="89"/>
        <end position="91"/>
    </location>
</feature>
<feature type="helix" evidence="11">
    <location>
        <begin position="92"/>
        <end position="101"/>
    </location>
</feature>
<feature type="turn" evidence="11">
    <location>
        <begin position="103"/>
        <end position="105"/>
    </location>
</feature>
<feature type="strand" evidence="11">
    <location>
        <begin position="109"/>
        <end position="117"/>
    </location>
</feature>
<feature type="strand" evidence="11">
    <location>
        <begin position="121"/>
        <end position="123"/>
    </location>
</feature>
<feature type="strand" evidence="11">
    <location>
        <begin position="125"/>
        <end position="133"/>
    </location>
</feature>
<feature type="turn" evidence="11">
    <location>
        <begin position="134"/>
        <end position="137"/>
    </location>
</feature>
<feature type="strand" evidence="11">
    <location>
        <begin position="138"/>
        <end position="146"/>
    </location>
</feature>
<feature type="turn" evidence="11">
    <location>
        <begin position="156"/>
        <end position="158"/>
    </location>
</feature>
<feature type="helix" evidence="11">
    <location>
        <begin position="162"/>
        <end position="173"/>
    </location>
</feature>
<feature type="strand" evidence="10">
    <location>
        <begin position="177"/>
        <end position="179"/>
    </location>
</feature>
<feature type="strand" evidence="11">
    <location>
        <begin position="186"/>
        <end position="188"/>
    </location>
</feature>
<feature type="strand" evidence="12">
    <location>
        <begin position="198"/>
        <end position="201"/>
    </location>
</feature>
<feature type="strand" evidence="11">
    <location>
        <begin position="206"/>
        <end position="212"/>
    </location>
</feature>
<feature type="turn" evidence="11">
    <location>
        <begin position="213"/>
        <end position="216"/>
    </location>
</feature>
<feature type="strand" evidence="11">
    <location>
        <begin position="217"/>
        <end position="222"/>
    </location>
</feature>
<feature type="strand" evidence="11">
    <location>
        <begin position="225"/>
        <end position="227"/>
    </location>
</feature>
<feature type="helix" evidence="11">
    <location>
        <begin position="242"/>
        <end position="244"/>
    </location>
</feature>
<name>NDUS3_MOUSE</name>
<reference key="1">
    <citation type="journal article" date="2005" name="Science">
        <title>The transcriptional landscape of the mammalian genome.</title>
        <authorList>
            <person name="Carninci P."/>
            <person name="Kasukawa T."/>
            <person name="Katayama S."/>
            <person name="Gough J."/>
            <person name="Frith M.C."/>
            <person name="Maeda N."/>
            <person name="Oyama R."/>
            <person name="Ravasi T."/>
            <person name="Lenhard B."/>
            <person name="Wells C."/>
            <person name="Kodzius R."/>
            <person name="Shimokawa K."/>
            <person name="Bajic V.B."/>
            <person name="Brenner S.E."/>
            <person name="Batalov S."/>
            <person name="Forrest A.R."/>
            <person name="Zavolan M."/>
            <person name="Davis M.J."/>
            <person name="Wilming L.G."/>
            <person name="Aidinis V."/>
            <person name="Allen J.E."/>
            <person name="Ambesi-Impiombato A."/>
            <person name="Apweiler R."/>
            <person name="Aturaliya R.N."/>
            <person name="Bailey T.L."/>
            <person name="Bansal M."/>
            <person name="Baxter L."/>
            <person name="Beisel K.W."/>
            <person name="Bersano T."/>
            <person name="Bono H."/>
            <person name="Chalk A.M."/>
            <person name="Chiu K.P."/>
            <person name="Choudhary V."/>
            <person name="Christoffels A."/>
            <person name="Clutterbuck D.R."/>
            <person name="Crowe M.L."/>
            <person name="Dalla E."/>
            <person name="Dalrymple B.P."/>
            <person name="de Bono B."/>
            <person name="Della Gatta G."/>
            <person name="di Bernardo D."/>
            <person name="Down T."/>
            <person name="Engstrom P."/>
            <person name="Fagiolini M."/>
            <person name="Faulkner G."/>
            <person name="Fletcher C.F."/>
            <person name="Fukushima T."/>
            <person name="Furuno M."/>
            <person name="Futaki S."/>
            <person name="Gariboldi M."/>
            <person name="Georgii-Hemming P."/>
            <person name="Gingeras T.R."/>
            <person name="Gojobori T."/>
            <person name="Green R.E."/>
            <person name="Gustincich S."/>
            <person name="Harbers M."/>
            <person name="Hayashi Y."/>
            <person name="Hensch T.K."/>
            <person name="Hirokawa N."/>
            <person name="Hill D."/>
            <person name="Huminiecki L."/>
            <person name="Iacono M."/>
            <person name="Ikeo K."/>
            <person name="Iwama A."/>
            <person name="Ishikawa T."/>
            <person name="Jakt M."/>
            <person name="Kanapin A."/>
            <person name="Katoh M."/>
            <person name="Kawasawa Y."/>
            <person name="Kelso J."/>
            <person name="Kitamura H."/>
            <person name="Kitano H."/>
            <person name="Kollias G."/>
            <person name="Krishnan S.P."/>
            <person name="Kruger A."/>
            <person name="Kummerfeld S.K."/>
            <person name="Kurochkin I.V."/>
            <person name="Lareau L.F."/>
            <person name="Lazarevic D."/>
            <person name="Lipovich L."/>
            <person name="Liu J."/>
            <person name="Liuni S."/>
            <person name="McWilliam S."/>
            <person name="Madan Babu M."/>
            <person name="Madera M."/>
            <person name="Marchionni L."/>
            <person name="Matsuda H."/>
            <person name="Matsuzawa S."/>
            <person name="Miki H."/>
            <person name="Mignone F."/>
            <person name="Miyake S."/>
            <person name="Morris K."/>
            <person name="Mottagui-Tabar S."/>
            <person name="Mulder N."/>
            <person name="Nakano N."/>
            <person name="Nakauchi H."/>
            <person name="Ng P."/>
            <person name="Nilsson R."/>
            <person name="Nishiguchi S."/>
            <person name="Nishikawa S."/>
            <person name="Nori F."/>
            <person name="Ohara O."/>
            <person name="Okazaki Y."/>
            <person name="Orlando V."/>
            <person name="Pang K.C."/>
            <person name="Pavan W.J."/>
            <person name="Pavesi G."/>
            <person name="Pesole G."/>
            <person name="Petrovsky N."/>
            <person name="Piazza S."/>
            <person name="Reed J."/>
            <person name="Reid J.F."/>
            <person name="Ring B.Z."/>
            <person name="Ringwald M."/>
            <person name="Rost B."/>
            <person name="Ruan Y."/>
            <person name="Salzberg S.L."/>
            <person name="Sandelin A."/>
            <person name="Schneider C."/>
            <person name="Schoenbach C."/>
            <person name="Sekiguchi K."/>
            <person name="Semple C.A."/>
            <person name="Seno S."/>
            <person name="Sessa L."/>
            <person name="Sheng Y."/>
            <person name="Shibata Y."/>
            <person name="Shimada H."/>
            <person name="Shimada K."/>
            <person name="Silva D."/>
            <person name="Sinclair B."/>
            <person name="Sperling S."/>
            <person name="Stupka E."/>
            <person name="Sugiura K."/>
            <person name="Sultana R."/>
            <person name="Takenaka Y."/>
            <person name="Taki K."/>
            <person name="Tammoja K."/>
            <person name="Tan S.L."/>
            <person name="Tang S."/>
            <person name="Taylor M.S."/>
            <person name="Tegner J."/>
            <person name="Teichmann S.A."/>
            <person name="Ueda H.R."/>
            <person name="van Nimwegen E."/>
            <person name="Verardo R."/>
            <person name="Wei C.L."/>
            <person name="Yagi K."/>
            <person name="Yamanishi H."/>
            <person name="Zabarovsky E."/>
            <person name="Zhu S."/>
            <person name="Zimmer A."/>
            <person name="Hide W."/>
            <person name="Bult C."/>
            <person name="Grimmond S.M."/>
            <person name="Teasdale R.D."/>
            <person name="Liu E.T."/>
            <person name="Brusic V."/>
            <person name="Quackenbush J."/>
            <person name="Wahlestedt C."/>
            <person name="Mattick J.S."/>
            <person name="Hume D.A."/>
            <person name="Kai C."/>
            <person name="Sasaki D."/>
            <person name="Tomaru Y."/>
            <person name="Fukuda S."/>
            <person name="Kanamori-Katayama M."/>
            <person name="Suzuki M."/>
            <person name="Aoki J."/>
            <person name="Arakawa T."/>
            <person name="Iida J."/>
            <person name="Imamura K."/>
            <person name="Itoh M."/>
            <person name="Kato T."/>
            <person name="Kawaji H."/>
            <person name="Kawagashira N."/>
            <person name="Kawashima T."/>
            <person name="Kojima M."/>
            <person name="Kondo S."/>
            <person name="Konno H."/>
            <person name="Nakano K."/>
            <person name="Ninomiya N."/>
            <person name="Nishio T."/>
            <person name="Okada M."/>
            <person name="Plessy C."/>
            <person name="Shibata K."/>
            <person name="Shiraki T."/>
            <person name="Suzuki S."/>
            <person name="Tagami M."/>
            <person name="Waki K."/>
            <person name="Watahiki A."/>
            <person name="Okamura-Oho Y."/>
            <person name="Suzuki H."/>
            <person name="Kawai J."/>
            <person name="Hayashizaki Y."/>
        </authorList>
    </citation>
    <scope>NUCLEOTIDE SEQUENCE [LARGE SCALE MRNA]</scope>
    <source>
        <strain>C57BL/6J</strain>
        <strain>NOD</strain>
        <tissue>Kidney</tissue>
        <tissue>Thymus</tissue>
    </source>
</reference>
<reference key="2">
    <citation type="journal article" date="2009" name="PLoS Biol.">
        <title>Lineage-specific biology revealed by a finished genome assembly of the mouse.</title>
        <authorList>
            <person name="Church D.M."/>
            <person name="Goodstadt L."/>
            <person name="Hillier L.W."/>
            <person name="Zody M.C."/>
            <person name="Goldstein S."/>
            <person name="She X."/>
            <person name="Bult C.J."/>
            <person name="Agarwala R."/>
            <person name="Cherry J.L."/>
            <person name="DiCuccio M."/>
            <person name="Hlavina W."/>
            <person name="Kapustin Y."/>
            <person name="Meric P."/>
            <person name="Maglott D."/>
            <person name="Birtle Z."/>
            <person name="Marques A.C."/>
            <person name="Graves T."/>
            <person name="Zhou S."/>
            <person name="Teague B."/>
            <person name="Potamousis K."/>
            <person name="Churas C."/>
            <person name="Place M."/>
            <person name="Herschleb J."/>
            <person name="Runnheim R."/>
            <person name="Forrest D."/>
            <person name="Amos-Landgraf J."/>
            <person name="Schwartz D.C."/>
            <person name="Cheng Z."/>
            <person name="Lindblad-Toh K."/>
            <person name="Eichler E.E."/>
            <person name="Ponting C.P."/>
        </authorList>
    </citation>
    <scope>NUCLEOTIDE SEQUENCE [LARGE SCALE GENOMIC DNA]</scope>
    <source>
        <strain>C57BL/6J</strain>
    </source>
</reference>
<reference key="3">
    <citation type="journal article" date="2004" name="Genome Res.">
        <title>The status, quality, and expansion of the NIH full-length cDNA project: the Mammalian Gene Collection (MGC).</title>
        <authorList>
            <consortium name="The MGC Project Team"/>
        </authorList>
    </citation>
    <scope>NUCLEOTIDE SEQUENCE [LARGE SCALE MRNA]</scope>
    <source>
        <tissue>Brain</tissue>
    </source>
</reference>
<reference key="4">
    <citation type="submission" date="2007-04" db="UniProtKB">
        <authorList>
            <person name="Lubec G."/>
            <person name="Klug S."/>
            <person name="Kang S.U."/>
        </authorList>
    </citation>
    <scope>PROTEIN SEQUENCE OF 109-121; 125-135; 186-198; 200-210 AND 218-245</scope>
    <scope>IDENTIFICATION BY MASS SPECTROMETRY</scope>
    <source>
        <strain>C57BL/6J</strain>
        <tissue>Brain</tissue>
        <tissue>Hippocampus</tissue>
    </source>
</reference>
<reference key="5">
    <citation type="journal article" date="2010" name="Cell">
        <title>A tissue-specific atlas of mouse protein phosphorylation and expression.</title>
        <authorList>
            <person name="Huttlin E.L."/>
            <person name="Jedrychowski M.P."/>
            <person name="Elias J.E."/>
            <person name="Goswami T."/>
            <person name="Rad R."/>
            <person name="Beausoleil S.A."/>
            <person name="Villen J."/>
            <person name="Haas W."/>
            <person name="Sowa M.E."/>
            <person name="Gygi S.P."/>
        </authorList>
    </citation>
    <scope>IDENTIFICATION BY MASS SPECTROMETRY [LARGE SCALE ANALYSIS]</scope>
    <source>
        <tissue>Brain</tissue>
        <tissue>Brown adipose tissue</tissue>
        <tissue>Heart</tissue>
        <tissue>Kidney</tissue>
        <tissue>Liver</tissue>
        <tissue>Lung</tissue>
        <tissue>Pancreas</tissue>
        <tissue>Spleen</tissue>
        <tissue>Testis</tissue>
    </source>
</reference>
<reference key="6">
    <citation type="journal article" date="2019" name="IScience">
        <title>Rewiring of the Human Mitochondrial Interactome during Neuronal Reprogramming Reveals Regulators of the Respirasome and Neurogenesis.</title>
        <authorList>
            <person name="Moutaoufik M.T."/>
            <person name="Malty R."/>
            <person name="Amin S."/>
            <person name="Zhang Q."/>
            <person name="Phanse S."/>
            <person name="Gagarinova A."/>
            <person name="Zilocchi M."/>
            <person name="Hoell L."/>
            <person name="Minic Z."/>
            <person name="Gagarinova M."/>
            <person name="Aoki H."/>
            <person name="Stockwell J."/>
            <person name="Jessulat M."/>
            <person name="Goebels F."/>
            <person name="Broderick K."/>
            <person name="Scott N.E."/>
            <person name="Vlasblom J."/>
            <person name="Musso G."/>
            <person name="Prasad B."/>
            <person name="Lamantea E."/>
            <person name="Garavaglia B."/>
            <person name="Rajput A."/>
            <person name="Murayama K."/>
            <person name="Okazaki Y."/>
            <person name="Foster L.J."/>
            <person name="Bader G.D."/>
            <person name="Cayabyab F.S."/>
            <person name="Babu M."/>
        </authorList>
    </citation>
    <scope>INTERACTION WITH RAB5IF</scope>
</reference>
<reference key="7">
    <citation type="journal article" date="2020" name="EMBO Mol. Med.">
        <title>Myopathy reversion in mice after restauration of mitochondrial complex I.</title>
        <authorList>
            <person name="Pereira C.V."/>
            <person name="Peralta S."/>
            <person name="Arguello T."/>
            <person name="Bacman S.R."/>
            <person name="Diaz F."/>
            <person name="Moraes C.T."/>
        </authorList>
    </citation>
    <scope>FUNCTION</scope>
    <scope>CATALYTIC ACTIVITY</scope>
    <scope>DISRUPTION PHENOTYPE</scope>
</reference>
<reference key="8">
    <citation type="journal article" date="2020" name="JCI Insight">
        <title>Metformin delays neurological symptom onset in a mouse model of neuronal complex I deficiency.</title>
        <authorList>
            <person name="Peralta S."/>
            <person name="Pinto M."/>
            <person name="Arguello T."/>
            <person name="Garcia S."/>
            <person name="Diaz F."/>
            <person name="Moraes C.T."/>
        </authorList>
    </citation>
    <scope>FUNCTION</scope>
    <scope>CATALYTIC ACTIVITY</scope>
    <scope>DISRUPTION PHENOTYPE</scope>
</reference>
<reference evidence="8" key="9">
    <citation type="journal article" date="2024" name="Nat. Struct. Mol. Biol.">
        <title>SCAF1 drives the compositional diversity of mammalian respirasomes.</title>
        <authorList>
            <person name="Vercellino I."/>
            <person name="Sazanov L.A."/>
        </authorList>
    </citation>
    <scope>STRUCTURE BY ELECTRON MICROSCOPY (3.60 ANGSTROMS) IN COMPLEX WITH MITOCHONDRIAL RESPIRATORY SUPERCOMPLEX</scope>
    <scope>FUNCTION</scope>
    <scope>SUBCELLULAR LOCATION</scope>
    <scope>SUBUNIT</scope>
</reference>
<organism>
    <name type="scientific">Mus musculus</name>
    <name type="common">Mouse</name>
    <dbReference type="NCBI Taxonomy" id="10090"/>
    <lineage>
        <taxon>Eukaryota</taxon>
        <taxon>Metazoa</taxon>
        <taxon>Chordata</taxon>
        <taxon>Craniata</taxon>
        <taxon>Vertebrata</taxon>
        <taxon>Euteleostomi</taxon>
        <taxon>Mammalia</taxon>
        <taxon>Eutheria</taxon>
        <taxon>Euarchontoglires</taxon>
        <taxon>Glires</taxon>
        <taxon>Rodentia</taxon>
        <taxon>Myomorpha</taxon>
        <taxon>Muroidea</taxon>
        <taxon>Muridae</taxon>
        <taxon>Murinae</taxon>
        <taxon>Mus</taxon>
        <taxon>Mus</taxon>
    </lineage>
</organism>
<protein>
    <recommendedName>
        <fullName>NADH dehydrogenase [ubiquinone] iron-sulfur protein 3, mitochondrial</fullName>
        <ecNumber evidence="4 5">7.1.1.2</ecNumber>
    </recommendedName>
    <alternativeName>
        <fullName>Complex I-30kD</fullName>
        <shortName>CI-30kD</shortName>
    </alternativeName>
    <alternativeName>
        <fullName>NADH-ubiquinone oxidoreductase 30 kDa subunit</fullName>
    </alternativeName>
</protein>
<proteinExistence type="evidence at protein level"/>
<sequence>MAAAAARVWCRGLLGAASVGRGAGRPSVLWQHVRRESAAADKRPTVRPRSDVTHKQLSAFGEYVAEILPKYVQQVQVSCLDELEICIHPDGVIPTLTFLRDHTNAQFKSLADLTAVDVPTRQNRFEIVYNLLSLRFNSRIRVKTYADELTPIDSIVSVHIAANWYEREVWDMFGVFFFNHPDLRRILTDYGFEGHPFRKDFPLTGYVELRYDDEVKRVVAEPVELAQEFRKFDLNSPWEAFPAYRQPPESLKLEAGDKKPETK</sequence>
<evidence type="ECO:0000250" key="1">
    <source>
        <dbReference type="UniProtKB" id="O75489"/>
    </source>
</evidence>
<evidence type="ECO:0000255" key="2"/>
<evidence type="ECO:0000269" key="3">
    <source>
    </source>
</evidence>
<evidence type="ECO:0000269" key="4">
    <source>
    </source>
</evidence>
<evidence type="ECO:0000269" key="5">
    <source>
    </source>
</evidence>
<evidence type="ECO:0000269" key="6">
    <source>
    </source>
</evidence>
<evidence type="ECO:0000305" key="7"/>
<evidence type="ECO:0007744" key="8">
    <source>
        <dbReference type="PDB" id="8PW5"/>
    </source>
</evidence>
<evidence type="ECO:0007829" key="9">
    <source>
        <dbReference type="PDB" id="6ZTQ"/>
    </source>
</evidence>
<evidence type="ECO:0007829" key="10">
    <source>
        <dbReference type="PDB" id="7B93"/>
    </source>
</evidence>
<evidence type="ECO:0007829" key="11">
    <source>
        <dbReference type="PDB" id="8OM1"/>
    </source>
</evidence>
<evidence type="ECO:0007829" key="12">
    <source>
        <dbReference type="PDB" id="8RGR"/>
    </source>
</evidence>